<organism>
    <name type="scientific">Escherichia coli O157:H7 (strain EC4115 / EHEC)</name>
    <dbReference type="NCBI Taxonomy" id="444450"/>
    <lineage>
        <taxon>Bacteria</taxon>
        <taxon>Pseudomonadati</taxon>
        <taxon>Pseudomonadota</taxon>
        <taxon>Gammaproteobacteria</taxon>
        <taxon>Enterobacterales</taxon>
        <taxon>Enterobacteriaceae</taxon>
        <taxon>Escherichia</taxon>
    </lineage>
</organism>
<protein>
    <recommendedName>
        <fullName evidence="1">Chorismate synthase</fullName>
        <shortName evidence="1">CS</shortName>
        <ecNumber evidence="1">4.2.3.5</ecNumber>
    </recommendedName>
    <alternativeName>
        <fullName evidence="1">5-enolpyruvylshikimate-3-phosphate phospholyase</fullName>
    </alternativeName>
</protein>
<comment type="function">
    <text evidence="1">Catalyzes the anti-1,4-elimination of the C-3 phosphate and the C-6 proR hydrogen from 5-enolpyruvylshikimate-3-phosphate (EPSP) to yield chorismate, which is the branch point compound that serves as the starting substrate for the three terminal pathways of aromatic amino acid biosynthesis. This reaction introduces a second double bond into the aromatic ring system.</text>
</comment>
<comment type="catalytic activity">
    <reaction evidence="1">
        <text>5-O-(1-carboxyvinyl)-3-phosphoshikimate = chorismate + phosphate</text>
        <dbReference type="Rhea" id="RHEA:21020"/>
        <dbReference type="ChEBI" id="CHEBI:29748"/>
        <dbReference type="ChEBI" id="CHEBI:43474"/>
        <dbReference type="ChEBI" id="CHEBI:57701"/>
        <dbReference type="EC" id="4.2.3.5"/>
    </reaction>
</comment>
<comment type="cofactor">
    <cofactor evidence="1">
        <name>FMNH2</name>
        <dbReference type="ChEBI" id="CHEBI:57618"/>
    </cofactor>
    <text evidence="1">Reduced FMN (FMNH(2)).</text>
</comment>
<comment type="pathway">
    <text evidence="1">Metabolic intermediate biosynthesis; chorismate biosynthesis; chorismate from D-erythrose 4-phosphate and phosphoenolpyruvate: step 7/7.</text>
</comment>
<comment type="subunit">
    <text evidence="1">Homotetramer.</text>
</comment>
<comment type="similarity">
    <text evidence="1">Belongs to the chorismate synthase family.</text>
</comment>
<reference key="1">
    <citation type="journal article" date="2011" name="Proc. Natl. Acad. Sci. U.S.A.">
        <title>Genomic anatomy of Escherichia coli O157:H7 outbreaks.</title>
        <authorList>
            <person name="Eppinger M."/>
            <person name="Mammel M.K."/>
            <person name="Leclerc J.E."/>
            <person name="Ravel J."/>
            <person name="Cebula T.A."/>
        </authorList>
    </citation>
    <scope>NUCLEOTIDE SEQUENCE [LARGE SCALE GENOMIC DNA]</scope>
    <source>
        <strain>EC4115 / EHEC</strain>
    </source>
</reference>
<name>AROC_ECO5E</name>
<evidence type="ECO:0000255" key="1">
    <source>
        <dbReference type="HAMAP-Rule" id="MF_00300"/>
    </source>
</evidence>
<feature type="chain" id="PRO_1000115348" description="Chorismate synthase">
    <location>
        <begin position="1"/>
        <end position="361"/>
    </location>
</feature>
<feature type="binding site" evidence="1">
    <location>
        <position position="48"/>
    </location>
    <ligand>
        <name>NADP(+)</name>
        <dbReference type="ChEBI" id="CHEBI:58349"/>
    </ligand>
</feature>
<feature type="binding site" evidence="1">
    <location>
        <position position="54"/>
    </location>
    <ligand>
        <name>NADP(+)</name>
        <dbReference type="ChEBI" id="CHEBI:58349"/>
    </ligand>
</feature>
<feature type="binding site" evidence="1">
    <location>
        <begin position="125"/>
        <end position="127"/>
    </location>
    <ligand>
        <name>FMN</name>
        <dbReference type="ChEBI" id="CHEBI:58210"/>
    </ligand>
</feature>
<feature type="binding site" evidence="1">
    <location>
        <begin position="238"/>
        <end position="239"/>
    </location>
    <ligand>
        <name>FMN</name>
        <dbReference type="ChEBI" id="CHEBI:58210"/>
    </ligand>
</feature>
<feature type="binding site" evidence="1">
    <location>
        <position position="278"/>
    </location>
    <ligand>
        <name>FMN</name>
        <dbReference type="ChEBI" id="CHEBI:58210"/>
    </ligand>
</feature>
<feature type="binding site" evidence="1">
    <location>
        <begin position="293"/>
        <end position="297"/>
    </location>
    <ligand>
        <name>FMN</name>
        <dbReference type="ChEBI" id="CHEBI:58210"/>
    </ligand>
</feature>
<feature type="binding site" evidence="1">
    <location>
        <position position="319"/>
    </location>
    <ligand>
        <name>FMN</name>
        <dbReference type="ChEBI" id="CHEBI:58210"/>
    </ligand>
</feature>
<sequence length="361" mass="39151">MAGNTIGQLFRVTTFGESHGLALGCIVDGVPPGIPLTEADLQHDLDRRRPGTSRYTTQRREPDQVKILSGVFEGVTTGTSIGLLIENTDQRSQDYSAIKDVFRPGHADYTYEQKYGLRDYRGGGRSSARETAMRVAAGAIAKKYLAEKFGIEIRGCLTQMGDIPLEIKDWSQVEQNPFFCPDPDKIDALDELMRALKKEGDSIGAKVTVVASGVPAGLGEPVFDRLDADIAHALMSINAVKGVEIGDGFDVVALRGSQNRDEITKDGFQSNHAGGILGGISSGQQIIAHMALKPTSSITVPGRTINRFGEEVEMITKGRHDPCVGIRAVPIAEAMLAIVLMDHLLRQRAQNADVKTDIPRW</sequence>
<keyword id="KW-0028">Amino-acid biosynthesis</keyword>
<keyword id="KW-0057">Aromatic amino acid biosynthesis</keyword>
<keyword id="KW-0274">FAD</keyword>
<keyword id="KW-0285">Flavoprotein</keyword>
<keyword id="KW-0288">FMN</keyword>
<keyword id="KW-0456">Lyase</keyword>
<keyword id="KW-0521">NADP</keyword>
<proteinExistence type="inferred from homology"/>
<accession>B5YXX0</accession>
<dbReference type="EC" id="4.2.3.5" evidence="1"/>
<dbReference type="EMBL" id="CP001164">
    <property type="protein sequence ID" value="ACI39828.1"/>
    <property type="molecule type" value="Genomic_DNA"/>
</dbReference>
<dbReference type="RefSeq" id="WP_001297933.1">
    <property type="nucleotide sequence ID" value="NC_011353.1"/>
</dbReference>
<dbReference type="SMR" id="B5YXX0"/>
<dbReference type="KEGG" id="ecf:ECH74115_3470"/>
<dbReference type="HOGENOM" id="CLU_034547_0_2_6"/>
<dbReference type="UniPathway" id="UPA00053">
    <property type="reaction ID" value="UER00090"/>
</dbReference>
<dbReference type="GO" id="GO:0005829">
    <property type="term" value="C:cytosol"/>
    <property type="evidence" value="ECO:0007669"/>
    <property type="project" value="TreeGrafter"/>
</dbReference>
<dbReference type="GO" id="GO:0004107">
    <property type="term" value="F:chorismate synthase activity"/>
    <property type="evidence" value="ECO:0007669"/>
    <property type="project" value="UniProtKB-UniRule"/>
</dbReference>
<dbReference type="GO" id="GO:0010181">
    <property type="term" value="F:FMN binding"/>
    <property type="evidence" value="ECO:0007669"/>
    <property type="project" value="TreeGrafter"/>
</dbReference>
<dbReference type="GO" id="GO:0008652">
    <property type="term" value="P:amino acid biosynthetic process"/>
    <property type="evidence" value="ECO:0007669"/>
    <property type="project" value="UniProtKB-KW"/>
</dbReference>
<dbReference type="GO" id="GO:0009073">
    <property type="term" value="P:aromatic amino acid family biosynthetic process"/>
    <property type="evidence" value="ECO:0007669"/>
    <property type="project" value="UniProtKB-KW"/>
</dbReference>
<dbReference type="GO" id="GO:0009423">
    <property type="term" value="P:chorismate biosynthetic process"/>
    <property type="evidence" value="ECO:0007669"/>
    <property type="project" value="UniProtKB-UniRule"/>
</dbReference>
<dbReference type="CDD" id="cd07304">
    <property type="entry name" value="Chorismate_synthase"/>
    <property type="match status" value="1"/>
</dbReference>
<dbReference type="FunFam" id="3.60.150.10:FF:000001">
    <property type="entry name" value="Chorismate synthase"/>
    <property type="match status" value="1"/>
</dbReference>
<dbReference type="Gene3D" id="3.60.150.10">
    <property type="entry name" value="Chorismate synthase AroC"/>
    <property type="match status" value="1"/>
</dbReference>
<dbReference type="HAMAP" id="MF_00300">
    <property type="entry name" value="Chorismate_synth"/>
    <property type="match status" value="1"/>
</dbReference>
<dbReference type="InterPro" id="IPR000453">
    <property type="entry name" value="Chorismate_synth"/>
</dbReference>
<dbReference type="InterPro" id="IPR035904">
    <property type="entry name" value="Chorismate_synth_AroC_sf"/>
</dbReference>
<dbReference type="InterPro" id="IPR020541">
    <property type="entry name" value="Chorismate_synthase_CS"/>
</dbReference>
<dbReference type="NCBIfam" id="TIGR00033">
    <property type="entry name" value="aroC"/>
    <property type="match status" value="1"/>
</dbReference>
<dbReference type="NCBIfam" id="NF003793">
    <property type="entry name" value="PRK05382.1"/>
    <property type="match status" value="1"/>
</dbReference>
<dbReference type="PANTHER" id="PTHR21085">
    <property type="entry name" value="CHORISMATE SYNTHASE"/>
    <property type="match status" value="1"/>
</dbReference>
<dbReference type="PANTHER" id="PTHR21085:SF0">
    <property type="entry name" value="CHORISMATE SYNTHASE"/>
    <property type="match status" value="1"/>
</dbReference>
<dbReference type="Pfam" id="PF01264">
    <property type="entry name" value="Chorismate_synt"/>
    <property type="match status" value="1"/>
</dbReference>
<dbReference type="PIRSF" id="PIRSF001456">
    <property type="entry name" value="Chorismate_synth"/>
    <property type="match status" value="1"/>
</dbReference>
<dbReference type="SUPFAM" id="SSF103263">
    <property type="entry name" value="Chorismate synthase, AroC"/>
    <property type="match status" value="1"/>
</dbReference>
<dbReference type="PROSITE" id="PS00787">
    <property type="entry name" value="CHORISMATE_SYNTHASE_1"/>
    <property type="match status" value="1"/>
</dbReference>
<dbReference type="PROSITE" id="PS00788">
    <property type="entry name" value="CHORISMATE_SYNTHASE_2"/>
    <property type="match status" value="1"/>
</dbReference>
<dbReference type="PROSITE" id="PS00789">
    <property type="entry name" value="CHORISMATE_SYNTHASE_3"/>
    <property type="match status" value="1"/>
</dbReference>
<gene>
    <name evidence="1" type="primary">aroC</name>
    <name type="ordered locus">ECH74115_3470</name>
</gene>